<feature type="chain" id="PRO_1000201963" description="DNA-binding protein TGAM_1196">
    <location>
        <begin position="1"/>
        <end position="112"/>
    </location>
</feature>
<reference key="1">
    <citation type="journal article" date="2007" name="Genome Biol.">
        <title>Genome analysis and genome-wide proteomics of Thermococcus gammatolerans, the most radioresistant organism known amongst the Archaea.</title>
        <authorList>
            <person name="Zivanovic Y."/>
            <person name="Armengaud J."/>
            <person name="Lagorce A."/>
            <person name="Leplat C."/>
            <person name="Guerin P."/>
            <person name="Dutertre M."/>
            <person name="Anthouard V."/>
            <person name="Forterre P."/>
            <person name="Wincker P."/>
            <person name="Confalonieri F."/>
        </authorList>
    </citation>
    <scope>NUCLEOTIDE SEQUENCE [LARGE SCALE GENOMIC DNA]</scope>
    <source>
        <strain>DSM 15229 / JCM 11827 / EJ3</strain>
    </source>
</reference>
<organism>
    <name type="scientific">Thermococcus gammatolerans (strain DSM 15229 / JCM 11827 / EJ3)</name>
    <dbReference type="NCBI Taxonomy" id="593117"/>
    <lineage>
        <taxon>Archaea</taxon>
        <taxon>Methanobacteriati</taxon>
        <taxon>Methanobacteriota</taxon>
        <taxon>Thermococci</taxon>
        <taxon>Thermococcales</taxon>
        <taxon>Thermococcaceae</taxon>
        <taxon>Thermococcus</taxon>
    </lineage>
</organism>
<sequence>MAEDIEEIRKRKLMELQKRYLEQQKAQEEAIKREMELQAQIDAIMRKILTPDARERLGRVKLVKPELARQVELVLVQLYQAGQIREPIDDAKLKKILAQIDARTRREFRIKW</sequence>
<evidence type="ECO:0000255" key="1">
    <source>
        <dbReference type="HAMAP-Rule" id="MF_00026"/>
    </source>
</evidence>
<gene>
    <name type="ordered locus">TGAM_1196</name>
</gene>
<dbReference type="EMBL" id="CP001398">
    <property type="protein sequence ID" value="ACS33698.1"/>
    <property type="molecule type" value="Genomic_DNA"/>
</dbReference>
<dbReference type="RefSeq" id="WP_015858811.1">
    <property type="nucleotide sequence ID" value="NC_012804.1"/>
</dbReference>
<dbReference type="SMR" id="C5A636"/>
<dbReference type="STRING" id="593117.TGAM_1196"/>
<dbReference type="PaxDb" id="593117-TGAM_1196"/>
<dbReference type="GeneID" id="7988583"/>
<dbReference type="KEGG" id="tga:TGAM_1196"/>
<dbReference type="PATRIC" id="fig|593117.10.peg.1195"/>
<dbReference type="eggNOG" id="arCOG04179">
    <property type="taxonomic scope" value="Archaea"/>
</dbReference>
<dbReference type="HOGENOM" id="CLU_122978_3_0_2"/>
<dbReference type="OrthoDB" id="7912at2157"/>
<dbReference type="Proteomes" id="UP000001488">
    <property type="component" value="Chromosome"/>
</dbReference>
<dbReference type="GO" id="GO:0005829">
    <property type="term" value="C:cytosol"/>
    <property type="evidence" value="ECO:0007669"/>
    <property type="project" value="TreeGrafter"/>
</dbReference>
<dbReference type="GO" id="GO:0003677">
    <property type="term" value="F:DNA binding"/>
    <property type="evidence" value="ECO:0007669"/>
    <property type="project" value="UniProtKB-UniRule"/>
</dbReference>
<dbReference type="Gene3D" id="1.10.8.140">
    <property type="entry name" value="PDCD5-like"/>
    <property type="match status" value="1"/>
</dbReference>
<dbReference type="HAMAP" id="MF_00026">
    <property type="entry name" value="dsDNA_bind"/>
    <property type="match status" value="1"/>
</dbReference>
<dbReference type="InterPro" id="IPR022889">
    <property type="entry name" value="DNA_bind_arc"/>
</dbReference>
<dbReference type="InterPro" id="IPR002836">
    <property type="entry name" value="PDCD5-like"/>
</dbReference>
<dbReference type="InterPro" id="IPR036883">
    <property type="entry name" value="PDCD5-like_sf"/>
</dbReference>
<dbReference type="NCBIfam" id="NF003268">
    <property type="entry name" value="PRK04239.1"/>
    <property type="match status" value="1"/>
</dbReference>
<dbReference type="PANTHER" id="PTHR10840">
    <property type="entry name" value="PROGRAMMED CELL DEATH PROTEIN 5"/>
    <property type="match status" value="1"/>
</dbReference>
<dbReference type="PANTHER" id="PTHR10840:SF0">
    <property type="entry name" value="PROGRAMMED CELL DEATH PROTEIN 5"/>
    <property type="match status" value="1"/>
</dbReference>
<dbReference type="Pfam" id="PF01984">
    <property type="entry name" value="dsDNA_bind"/>
    <property type="match status" value="1"/>
</dbReference>
<dbReference type="PIRSF" id="PIRSF015730">
    <property type="entry name" value="TFAR19"/>
    <property type="match status" value="1"/>
</dbReference>
<dbReference type="SUPFAM" id="SSF46950">
    <property type="entry name" value="Double-stranded DNA-binding domain"/>
    <property type="match status" value="1"/>
</dbReference>
<proteinExistence type="inferred from homology"/>
<protein>
    <recommendedName>
        <fullName evidence="1">DNA-binding protein TGAM_1196</fullName>
    </recommendedName>
</protein>
<name>Y1196_THEGJ</name>
<accession>C5A636</accession>
<comment type="similarity">
    <text evidence="1">Belongs to the PDCD5 family.</text>
</comment>
<keyword id="KW-0238">DNA-binding</keyword>
<keyword id="KW-1185">Reference proteome</keyword>